<feature type="chain" id="PRO_0000351611" description="Transcriptional regulator LsrR">
    <location>
        <begin position="1"/>
        <end position="317"/>
    </location>
</feature>
<feature type="DNA-binding region" description="H-T-H motif" evidence="2">
    <location>
        <begin position="33"/>
        <end position="56"/>
    </location>
</feature>
<keyword id="KW-0963">Cytoplasm</keyword>
<keyword id="KW-0238">DNA-binding</keyword>
<keyword id="KW-0678">Repressor</keyword>
<keyword id="KW-0804">Transcription</keyword>
<keyword id="KW-0805">Transcription regulation</keyword>
<proteinExistence type="inferred from homology"/>
<protein>
    <recommendedName>
        <fullName evidence="1">Transcriptional regulator LsrR</fullName>
    </recommendedName>
</protein>
<gene>
    <name type="primary">lsrR</name>
    <name type="ordered locus">EcolC_2146</name>
</gene>
<dbReference type="EMBL" id="CP000946">
    <property type="protein sequence ID" value="ACA77786.1"/>
    <property type="molecule type" value="Genomic_DNA"/>
</dbReference>
<dbReference type="RefSeq" id="WP_000154352.1">
    <property type="nucleotide sequence ID" value="NZ_MTFT01000006.1"/>
</dbReference>
<dbReference type="SMR" id="B1IRU8"/>
<dbReference type="KEGG" id="ecl:EcolC_2146"/>
<dbReference type="HOGENOM" id="CLU_054506_0_1_6"/>
<dbReference type="GO" id="GO:0005737">
    <property type="term" value="C:cytoplasm"/>
    <property type="evidence" value="ECO:0007669"/>
    <property type="project" value="UniProtKB-SubCell"/>
</dbReference>
<dbReference type="GO" id="GO:0030246">
    <property type="term" value="F:carbohydrate binding"/>
    <property type="evidence" value="ECO:0007669"/>
    <property type="project" value="InterPro"/>
</dbReference>
<dbReference type="GO" id="GO:0003677">
    <property type="term" value="F:DNA binding"/>
    <property type="evidence" value="ECO:0007669"/>
    <property type="project" value="UniProtKB-KW"/>
</dbReference>
<dbReference type="FunFam" id="1.10.10.10:FF:000195">
    <property type="entry name" value="LsrR family transcriptional regulator"/>
    <property type="match status" value="1"/>
</dbReference>
<dbReference type="FunFam" id="3.40.50.1360:FF:000012">
    <property type="entry name" value="LsrR family transcriptional regulator"/>
    <property type="match status" value="1"/>
</dbReference>
<dbReference type="Gene3D" id="3.40.50.1360">
    <property type="match status" value="1"/>
</dbReference>
<dbReference type="Gene3D" id="1.10.10.10">
    <property type="entry name" value="Winged helix-like DNA-binding domain superfamily/Winged helix DNA-binding domain"/>
    <property type="match status" value="1"/>
</dbReference>
<dbReference type="InterPro" id="IPR037171">
    <property type="entry name" value="NagB/RpiA_transferase-like"/>
</dbReference>
<dbReference type="InterPro" id="IPR051054">
    <property type="entry name" value="SorC_transcr_regulators"/>
</dbReference>
<dbReference type="InterPro" id="IPR007324">
    <property type="entry name" value="Sugar-bd_dom_put"/>
</dbReference>
<dbReference type="InterPro" id="IPR036388">
    <property type="entry name" value="WH-like_DNA-bd_sf"/>
</dbReference>
<dbReference type="NCBIfam" id="NF011947">
    <property type="entry name" value="PRK15418.1"/>
    <property type="match status" value="1"/>
</dbReference>
<dbReference type="PANTHER" id="PTHR34294:SF1">
    <property type="entry name" value="TRANSCRIPTIONAL REGULATOR LSRR"/>
    <property type="match status" value="1"/>
</dbReference>
<dbReference type="PANTHER" id="PTHR34294">
    <property type="entry name" value="TRANSCRIPTIONAL REGULATOR-RELATED"/>
    <property type="match status" value="1"/>
</dbReference>
<dbReference type="Pfam" id="PF04198">
    <property type="entry name" value="Sugar-bind"/>
    <property type="match status" value="1"/>
</dbReference>
<dbReference type="SUPFAM" id="SSF100950">
    <property type="entry name" value="NagB/RpiA/CoA transferase-like"/>
    <property type="match status" value="1"/>
</dbReference>
<evidence type="ECO:0000250" key="1">
    <source>
        <dbReference type="UniProtKB" id="P76141"/>
    </source>
</evidence>
<evidence type="ECO:0000305" key="2"/>
<reference key="1">
    <citation type="submission" date="2008-02" db="EMBL/GenBank/DDBJ databases">
        <title>Complete sequence of Escherichia coli C str. ATCC 8739.</title>
        <authorList>
            <person name="Copeland A."/>
            <person name="Lucas S."/>
            <person name="Lapidus A."/>
            <person name="Glavina del Rio T."/>
            <person name="Dalin E."/>
            <person name="Tice H."/>
            <person name="Bruce D."/>
            <person name="Goodwin L."/>
            <person name="Pitluck S."/>
            <person name="Kiss H."/>
            <person name="Brettin T."/>
            <person name="Detter J.C."/>
            <person name="Han C."/>
            <person name="Kuske C.R."/>
            <person name="Schmutz J."/>
            <person name="Larimer F."/>
            <person name="Land M."/>
            <person name="Hauser L."/>
            <person name="Kyrpides N."/>
            <person name="Mikhailova N."/>
            <person name="Ingram L."/>
            <person name="Richardson P."/>
        </authorList>
    </citation>
    <scope>NUCLEOTIDE SEQUENCE [LARGE SCALE GENOMIC DNA]</scope>
    <source>
        <strain>ATCC 8739 / DSM 1576 / NBRC 3972 / NCIMB 8545 / WDCM 00012 / Crooks</strain>
    </source>
</reference>
<organism>
    <name type="scientific">Escherichia coli (strain ATCC 8739 / DSM 1576 / NBRC 3972 / NCIMB 8545 / WDCM 00012 / Crooks)</name>
    <dbReference type="NCBI Taxonomy" id="481805"/>
    <lineage>
        <taxon>Bacteria</taxon>
        <taxon>Pseudomonadati</taxon>
        <taxon>Pseudomonadota</taxon>
        <taxon>Gammaproteobacteria</taxon>
        <taxon>Enterobacterales</taxon>
        <taxon>Enterobacteriaceae</taxon>
        <taxon>Escherichia</taxon>
    </lineage>
</organism>
<name>LSRR_ECOLC</name>
<accession>B1IRU8</accession>
<sequence length="317" mass="33826">MTINDSVISEQGMCEEEQVARIAWFYYHDGLTQSEISDRLGLTRLKVSRLLEKGHQSGIIRVQINSRFEGCLEYETQLRRQFSLQHVRVIPGLADADVGGRLGIGAAHMLMSLLQPQQMLAIGFGEATMNTLQRLSGFISSQQIRLVTLSGGVGSYMTGIGQLNAACSVNIIPAPLRASSADIARTLKNENCVKDVLLAAQAADVAIVGIGAVSQQDDATIIRSGYISQGEQLMIGRKGAVGDILGYFFDAKGDVVTDIKIHNELIGLPLSALKTIPVRVGVAGGENKAEAIAAAMKGGYINALVTDQDTAAAILRS</sequence>
<comment type="function">
    <text evidence="1">Transcriptional regulator that represses the expression of the lsr operon in the absence of the quorum-sensing signaling molecule autoinducer 2 (AI-2) (By similarity). It also represses the expression of the lsrRK operon (By similarity). Acts by binding directly to the lsrA and lsrR promoter regions (By similarity). In the presence of phosphorylated autoinducer-2 (phospho-AI-2), LsrR is inactivated, leading to the transcription of the genes (By similarity).</text>
</comment>
<comment type="activity regulation">
    <text evidence="1">Inactivated by phosphorylated autoinducer-2 (phospho-AI-2) (By similarity). Phospho-AI-2 acts by binding to LsrR, which is then unable to bind to the promoter regions, allowing the transcription of the target genes (By similarity).</text>
</comment>
<comment type="subcellular location">
    <subcellularLocation>
        <location evidence="2">Cytoplasm</location>
    </subcellularLocation>
</comment>
<comment type="similarity">
    <text evidence="2">Belongs to the SorC transcriptional regulatory family.</text>
</comment>